<feature type="chain" id="PRO_0000286498" description="Signal recognition particle protein">
    <location>
        <begin position="1"/>
        <end position="449"/>
    </location>
</feature>
<feature type="binding site" evidence="1">
    <location>
        <begin position="109"/>
        <end position="116"/>
    </location>
    <ligand>
        <name>GTP</name>
        <dbReference type="ChEBI" id="CHEBI:37565"/>
    </ligand>
</feature>
<feature type="binding site" evidence="1">
    <location>
        <begin position="191"/>
        <end position="195"/>
    </location>
    <ligand>
        <name>GTP</name>
        <dbReference type="ChEBI" id="CHEBI:37565"/>
    </ligand>
</feature>
<feature type="binding site" evidence="1">
    <location>
        <begin position="249"/>
        <end position="252"/>
    </location>
    <ligand>
        <name>GTP</name>
        <dbReference type="ChEBI" id="CHEBI:37565"/>
    </ligand>
</feature>
<name>SRP54_RICBR</name>
<organism>
    <name type="scientific">Rickettsia bellii (strain RML369-C)</name>
    <dbReference type="NCBI Taxonomy" id="336407"/>
    <lineage>
        <taxon>Bacteria</taxon>
        <taxon>Pseudomonadati</taxon>
        <taxon>Pseudomonadota</taxon>
        <taxon>Alphaproteobacteria</taxon>
        <taxon>Rickettsiales</taxon>
        <taxon>Rickettsiaceae</taxon>
        <taxon>Rickettsieae</taxon>
        <taxon>Rickettsia</taxon>
        <taxon>belli group</taxon>
    </lineage>
</organism>
<gene>
    <name evidence="1" type="primary">ffh</name>
    <name type="ordered locus">RBE_1147</name>
</gene>
<evidence type="ECO:0000255" key="1">
    <source>
        <dbReference type="HAMAP-Rule" id="MF_00306"/>
    </source>
</evidence>
<proteinExistence type="inferred from homology"/>
<sequence length="449" mass="49392">MFKTLTQNLMKIFDRLVSSGLLTEEQIDAALRDIRVALLESDVALPVIKNFVAEVKQKALGQEVIKSVSPGQMIIKIIHEEMINILSSSEDEIKLNLNAKPPVNLLMVGLQGSGKTTASGKLALCLKNQNKKVLLVSLDTYRPAAQEQLEILANSVKINSLPIVKGEKPLDIVKRAMAEAKLSAYDIVIYDTAGRTQIDQEMMNEAIAIKKIVEPTETLLVIDSMTGQDAVVTASSFNEQLEISGLILSRIDGDSKGGAALSVKYITQRPIKFLSSGEKLTDLEEFDAKRIASRILDMGDIISFVEKAASIVDREQAEKTAAKLKKGKFDLNDYLQQMKSIKKIGGFGSILSMLPGSGKIMDQIDQSKLNSKIIEHQEAIILSMTPKERRNPDIINASRRKRIALGAGTTVQKVNILLKQFKQISDMMKKASNMNPKNLLRSGLGKLFS</sequence>
<reference key="1">
    <citation type="journal article" date="2006" name="PLoS Genet.">
        <title>Genome sequence of Rickettsia bellii illuminates the role of amoebae in gene exchanges between intracellular pathogens.</title>
        <authorList>
            <person name="Ogata H."/>
            <person name="La Scola B."/>
            <person name="Audic S."/>
            <person name="Renesto P."/>
            <person name="Blanc G."/>
            <person name="Robert C."/>
            <person name="Fournier P.-E."/>
            <person name="Claverie J.-M."/>
            <person name="Raoult D."/>
        </authorList>
    </citation>
    <scope>NUCLEOTIDE SEQUENCE [LARGE SCALE GENOMIC DNA]</scope>
    <source>
        <strain>RML369-C</strain>
    </source>
</reference>
<protein>
    <recommendedName>
        <fullName evidence="1">Signal recognition particle protein</fullName>
        <ecNumber evidence="1">3.6.5.4</ecNumber>
    </recommendedName>
    <alternativeName>
        <fullName evidence="1">Fifty-four homolog</fullName>
    </alternativeName>
</protein>
<comment type="function">
    <text evidence="1">Involved in targeting and insertion of nascent membrane proteins into the cytoplasmic membrane. Binds to the hydrophobic signal sequence of the ribosome-nascent chain (RNC) as it emerges from the ribosomes. The SRP-RNC complex is then targeted to the cytoplasmic membrane where it interacts with the SRP receptor FtsY. Interaction with FtsY leads to the transfer of the RNC complex to the Sec translocase for insertion into the membrane, the hydrolysis of GTP by both Ffh and FtsY, and the dissociation of the SRP-FtsY complex into the individual components.</text>
</comment>
<comment type="catalytic activity">
    <reaction evidence="1">
        <text>GTP + H2O = GDP + phosphate + H(+)</text>
        <dbReference type="Rhea" id="RHEA:19669"/>
        <dbReference type="ChEBI" id="CHEBI:15377"/>
        <dbReference type="ChEBI" id="CHEBI:15378"/>
        <dbReference type="ChEBI" id="CHEBI:37565"/>
        <dbReference type="ChEBI" id="CHEBI:43474"/>
        <dbReference type="ChEBI" id="CHEBI:58189"/>
        <dbReference type="EC" id="3.6.5.4"/>
    </reaction>
</comment>
<comment type="subunit">
    <text evidence="1">Part of the signal recognition particle protein translocation system, which is composed of SRP and FtsY. SRP is a ribonucleoprotein composed of Ffh and a 4.5S RNA molecule.</text>
</comment>
<comment type="subcellular location">
    <subcellularLocation>
        <location evidence="1">Cytoplasm</location>
    </subcellularLocation>
    <text evidence="1">The SRP-RNC complex is targeted to the cytoplasmic membrane.</text>
</comment>
<comment type="domain">
    <text evidence="1">Composed of three domains: the N-terminal N domain, which is responsible for interactions with the ribosome, the central G domain, which binds GTP, and the C-terminal M domain, which binds the RNA and the signal sequence of the RNC.</text>
</comment>
<comment type="similarity">
    <text evidence="1">Belongs to the GTP-binding SRP family. SRP54 subfamily.</text>
</comment>
<accession>Q1RHD6</accession>
<keyword id="KW-0963">Cytoplasm</keyword>
<keyword id="KW-0342">GTP-binding</keyword>
<keyword id="KW-0378">Hydrolase</keyword>
<keyword id="KW-0547">Nucleotide-binding</keyword>
<keyword id="KW-0687">Ribonucleoprotein</keyword>
<keyword id="KW-0694">RNA-binding</keyword>
<keyword id="KW-0733">Signal recognition particle</keyword>
<dbReference type="EC" id="3.6.5.4" evidence="1"/>
<dbReference type="EMBL" id="CP000087">
    <property type="protein sequence ID" value="ABE05228.1"/>
    <property type="molecule type" value="Genomic_DNA"/>
</dbReference>
<dbReference type="RefSeq" id="WP_011477806.1">
    <property type="nucleotide sequence ID" value="NC_007940.1"/>
</dbReference>
<dbReference type="SMR" id="Q1RHD6"/>
<dbReference type="KEGG" id="rbe:RBE_1147"/>
<dbReference type="eggNOG" id="COG0541">
    <property type="taxonomic scope" value="Bacteria"/>
</dbReference>
<dbReference type="HOGENOM" id="CLU_009301_6_0_5"/>
<dbReference type="OrthoDB" id="9804720at2"/>
<dbReference type="Proteomes" id="UP000001951">
    <property type="component" value="Chromosome"/>
</dbReference>
<dbReference type="GO" id="GO:0048500">
    <property type="term" value="C:signal recognition particle"/>
    <property type="evidence" value="ECO:0007669"/>
    <property type="project" value="UniProtKB-UniRule"/>
</dbReference>
<dbReference type="GO" id="GO:0008312">
    <property type="term" value="F:7S RNA binding"/>
    <property type="evidence" value="ECO:0007669"/>
    <property type="project" value="InterPro"/>
</dbReference>
<dbReference type="GO" id="GO:0016887">
    <property type="term" value="F:ATP hydrolysis activity"/>
    <property type="evidence" value="ECO:0007669"/>
    <property type="project" value="InterPro"/>
</dbReference>
<dbReference type="GO" id="GO:0005525">
    <property type="term" value="F:GTP binding"/>
    <property type="evidence" value="ECO:0007669"/>
    <property type="project" value="UniProtKB-UniRule"/>
</dbReference>
<dbReference type="GO" id="GO:0003924">
    <property type="term" value="F:GTPase activity"/>
    <property type="evidence" value="ECO:0007669"/>
    <property type="project" value="UniProtKB-UniRule"/>
</dbReference>
<dbReference type="GO" id="GO:0006614">
    <property type="term" value="P:SRP-dependent cotranslational protein targeting to membrane"/>
    <property type="evidence" value="ECO:0007669"/>
    <property type="project" value="InterPro"/>
</dbReference>
<dbReference type="CDD" id="cd18539">
    <property type="entry name" value="SRP_G"/>
    <property type="match status" value="1"/>
</dbReference>
<dbReference type="Gene3D" id="3.40.50.300">
    <property type="entry name" value="P-loop containing nucleotide triphosphate hydrolases"/>
    <property type="match status" value="1"/>
</dbReference>
<dbReference type="Gene3D" id="1.20.120.140">
    <property type="entry name" value="Signal recognition particle SRP54, nucleotide-binding domain"/>
    <property type="match status" value="1"/>
</dbReference>
<dbReference type="Gene3D" id="1.10.260.30">
    <property type="entry name" value="Signal recognition particle, SRP54 subunit, M-domain"/>
    <property type="match status" value="1"/>
</dbReference>
<dbReference type="HAMAP" id="MF_00306">
    <property type="entry name" value="SRP54"/>
    <property type="match status" value="1"/>
</dbReference>
<dbReference type="InterPro" id="IPR003593">
    <property type="entry name" value="AAA+_ATPase"/>
</dbReference>
<dbReference type="InterPro" id="IPR027417">
    <property type="entry name" value="P-loop_NTPase"/>
</dbReference>
<dbReference type="InterPro" id="IPR036891">
    <property type="entry name" value="Signal_recog_part_SRP54_M_sf"/>
</dbReference>
<dbReference type="InterPro" id="IPR013822">
    <property type="entry name" value="Signal_recog_particl_SRP54_hlx"/>
</dbReference>
<dbReference type="InterPro" id="IPR004125">
    <property type="entry name" value="Signal_recog_particle_SRP54_M"/>
</dbReference>
<dbReference type="InterPro" id="IPR004780">
    <property type="entry name" value="SRP"/>
</dbReference>
<dbReference type="InterPro" id="IPR036225">
    <property type="entry name" value="SRP/SRP_N"/>
</dbReference>
<dbReference type="InterPro" id="IPR022941">
    <property type="entry name" value="SRP54"/>
</dbReference>
<dbReference type="InterPro" id="IPR000897">
    <property type="entry name" value="SRP54_GTPase_dom"/>
</dbReference>
<dbReference type="InterPro" id="IPR042101">
    <property type="entry name" value="SRP54_N_sf"/>
</dbReference>
<dbReference type="NCBIfam" id="TIGR00959">
    <property type="entry name" value="ffh"/>
    <property type="match status" value="1"/>
</dbReference>
<dbReference type="PANTHER" id="PTHR11564">
    <property type="entry name" value="SIGNAL RECOGNITION PARTICLE 54K PROTEIN SRP54"/>
    <property type="match status" value="1"/>
</dbReference>
<dbReference type="PANTHER" id="PTHR11564:SF5">
    <property type="entry name" value="SIGNAL RECOGNITION PARTICLE SUBUNIT SRP54"/>
    <property type="match status" value="1"/>
</dbReference>
<dbReference type="Pfam" id="PF00448">
    <property type="entry name" value="SRP54"/>
    <property type="match status" value="1"/>
</dbReference>
<dbReference type="Pfam" id="PF02881">
    <property type="entry name" value="SRP54_N"/>
    <property type="match status" value="1"/>
</dbReference>
<dbReference type="Pfam" id="PF02978">
    <property type="entry name" value="SRP_SPB"/>
    <property type="match status" value="1"/>
</dbReference>
<dbReference type="SMART" id="SM00382">
    <property type="entry name" value="AAA"/>
    <property type="match status" value="1"/>
</dbReference>
<dbReference type="SMART" id="SM00962">
    <property type="entry name" value="SRP54"/>
    <property type="match status" value="1"/>
</dbReference>
<dbReference type="SMART" id="SM00963">
    <property type="entry name" value="SRP54_N"/>
    <property type="match status" value="1"/>
</dbReference>
<dbReference type="SUPFAM" id="SSF47364">
    <property type="entry name" value="Domain of the SRP/SRP receptor G-proteins"/>
    <property type="match status" value="1"/>
</dbReference>
<dbReference type="SUPFAM" id="SSF52540">
    <property type="entry name" value="P-loop containing nucleoside triphosphate hydrolases"/>
    <property type="match status" value="1"/>
</dbReference>
<dbReference type="SUPFAM" id="SSF47446">
    <property type="entry name" value="Signal peptide-binding domain"/>
    <property type="match status" value="1"/>
</dbReference>
<dbReference type="PROSITE" id="PS00300">
    <property type="entry name" value="SRP54"/>
    <property type="match status" value="1"/>
</dbReference>